<accession>Q99338</accession>
<reference key="1">
    <citation type="journal article" date="1990" name="J. Bacteriol.">
        <title>Structural and genetic organization of IS232, a new insertion sequence of Bacillus thuringiensis.</title>
        <authorList>
            <person name="Menou G."/>
            <person name="Mahillon J."/>
            <person name="Lecadet M.-M."/>
            <person name="Lereclus D."/>
        </authorList>
    </citation>
    <scope>NUCLEOTIDE SEQUENCE [GENOMIC DNA]</scope>
    <source>
        <strain>1715</strain>
    </source>
</reference>
<dbReference type="EMBL" id="M38370">
    <property type="protein sequence ID" value="AAA98141.1"/>
    <property type="molecule type" value="Genomic_DNA"/>
</dbReference>
<dbReference type="PIR" id="B37801">
    <property type="entry name" value="B37801"/>
</dbReference>
<dbReference type="RefSeq" id="WP_000798699.1">
    <property type="nucleotide sequence ID" value="NZ_PHSK01000019.1"/>
</dbReference>
<dbReference type="SMR" id="Q99338"/>
<dbReference type="GeneID" id="67470609"/>
<dbReference type="GO" id="GO:0005524">
    <property type="term" value="F:ATP binding"/>
    <property type="evidence" value="ECO:0007669"/>
    <property type="project" value="UniProtKB-KW"/>
</dbReference>
<dbReference type="GO" id="GO:0016887">
    <property type="term" value="F:ATP hydrolysis activity"/>
    <property type="evidence" value="ECO:0007669"/>
    <property type="project" value="InterPro"/>
</dbReference>
<dbReference type="GO" id="GO:0006260">
    <property type="term" value="P:DNA replication"/>
    <property type="evidence" value="ECO:0007669"/>
    <property type="project" value="TreeGrafter"/>
</dbReference>
<dbReference type="CDD" id="cd00009">
    <property type="entry name" value="AAA"/>
    <property type="match status" value="1"/>
</dbReference>
<dbReference type="Gene3D" id="3.40.50.300">
    <property type="entry name" value="P-loop containing nucleotide triphosphate hydrolases"/>
    <property type="match status" value="1"/>
</dbReference>
<dbReference type="InterPro" id="IPR003593">
    <property type="entry name" value="AAA+_ATPase"/>
</dbReference>
<dbReference type="InterPro" id="IPR001270">
    <property type="entry name" value="ClpA/B"/>
</dbReference>
<dbReference type="InterPro" id="IPR028350">
    <property type="entry name" value="DNAC/IstB-like"/>
</dbReference>
<dbReference type="InterPro" id="IPR047661">
    <property type="entry name" value="IstB"/>
</dbReference>
<dbReference type="InterPro" id="IPR002611">
    <property type="entry name" value="IstB_ATP-bd"/>
</dbReference>
<dbReference type="InterPro" id="IPR027417">
    <property type="entry name" value="P-loop_NTPase"/>
</dbReference>
<dbReference type="NCBIfam" id="NF038214">
    <property type="entry name" value="IS21_help_AAA"/>
    <property type="match status" value="1"/>
</dbReference>
<dbReference type="PANTHER" id="PTHR30050:SF4">
    <property type="entry name" value="ATP-BINDING PROTEIN RV3427C IN INSERTION SEQUENCE-RELATED"/>
    <property type="match status" value="1"/>
</dbReference>
<dbReference type="PANTHER" id="PTHR30050">
    <property type="entry name" value="CHROMOSOMAL REPLICATION INITIATOR PROTEIN DNAA"/>
    <property type="match status" value="1"/>
</dbReference>
<dbReference type="Pfam" id="PF01695">
    <property type="entry name" value="IstB_IS21"/>
    <property type="match status" value="1"/>
</dbReference>
<dbReference type="PIRSF" id="PIRSF003073">
    <property type="entry name" value="DNAC_TnpB_IstB"/>
    <property type="match status" value="1"/>
</dbReference>
<dbReference type="PRINTS" id="PR00300">
    <property type="entry name" value="CLPPROTEASEA"/>
</dbReference>
<dbReference type="SMART" id="SM00382">
    <property type="entry name" value="AAA"/>
    <property type="match status" value="1"/>
</dbReference>
<dbReference type="SUPFAM" id="SSF52540">
    <property type="entry name" value="P-loop containing nucleoside triphosphate hydrolases"/>
    <property type="match status" value="1"/>
</dbReference>
<comment type="similarity">
    <text evidence="2">Belongs to the IS21/IS1162 putative ATP-binding protein family.</text>
</comment>
<evidence type="ECO:0000255" key="1"/>
<evidence type="ECO:0000305" key="2"/>
<sequence length="250" mass="29232">MKNSYQQLTTNLEYLKLKQMAQHLGDVVDFSINNELSFVETLVKLTNYEIDVREQNMIHSMVKMGAFPHRKEVDEFDFEFQPSINKQQILDFISLRFLEQQENIVFLGPSGVGKTHLATSIGIAAAKKRTSTYFIKCHDLLQNLKRAKIENRLESRLKHYTKYKLLIIDEIGYLPIDPEDAKLFFQLIDMRYEKRSTILTTNINFKSWDEVFQDPKLANAILDRVLHHATVVSIVGQSYRIKDHFSKEND</sequence>
<organism>
    <name type="scientific">Bacillus thuringiensis subsp. berliner</name>
    <dbReference type="NCBI Taxonomy" id="1434"/>
    <lineage>
        <taxon>Bacteria</taxon>
        <taxon>Bacillati</taxon>
        <taxon>Bacillota</taxon>
        <taxon>Bacilli</taxon>
        <taxon>Bacillales</taxon>
        <taxon>Bacillaceae</taxon>
        <taxon>Bacillus</taxon>
        <taxon>Bacillus cereus group</taxon>
    </lineage>
</organism>
<proteinExistence type="inferred from homology"/>
<feature type="chain" id="PRO_0000075478" description="Insertion sequence IS232 putative ATP-binding protein">
    <location>
        <begin position="1"/>
        <end position="250"/>
    </location>
</feature>
<feature type="binding site" evidence="1">
    <location>
        <begin position="108"/>
        <end position="115"/>
    </location>
    <ligand>
        <name>ATP</name>
        <dbReference type="ChEBI" id="CHEBI:30616"/>
    </ligand>
</feature>
<protein>
    <recommendedName>
        <fullName>Insertion sequence IS232 putative ATP-binding protein</fullName>
    </recommendedName>
</protein>
<keyword id="KW-0067">ATP-binding</keyword>
<keyword id="KW-0547">Nucleotide-binding</keyword>
<keyword id="KW-0814">Transposable element</keyword>
<name>ISTB_BACTB</name>